<proteinExistence type="inferred from homology"/>
<feature type="chain" id="PRO_0000240019" description="NAD(P)H-quinone oxidoreductase subunit 1, chloroplastic">
    <location>
        <begin position="1"/>
        <end position="363"/>
    </location>
</feature>
<feature type="transmembrane region" description="Helical" evidence="1">
    <location>
        <begin position="30"/>
        <end position="50"/>
    </location>
</feature>
<feature type="transmembrane region" description="Helical" evidence="1">
    <location>
        <begin position="104"/>
        <end position="124"/>
    </location>
</feature>
<feature type="transmembrane region" description="Helical" evidence="1">
    <location>
        <begin position="129"/>
        <end position="149"/>
    </location>
</feature>
<feature type="transmembrane region" description="Helical" evidence="1">
    <location>
        <begin position="248"/>
        <end position="268"/>
    </location>
</feature>
<feature type="transmembrane region" description="Helical" evidence="1">
    <location>
        <begin position="300"/>
        <end position="320"/>
    </location>
</feature>
<feature type="transmembrane region" description="Helical" evidence="1">
    <location>
        <begin position="343"/>
        <end position="363"/>
    </location>
</feature>
<reference key="1">
    <citation type="journal article" date="2005" name="DNA Res.">
        <title>Complete nucleotide sequence of the chloroplast genome from the Tasmanian blue gum, Eucalyptus globulus (Myrtaceae).</title>
        <authorList>
            <person name="Steane D.A."/>
        </authorList>
    </citation>
    <scope>NUCLEOTIDE SEQUENCE [LARGE SCALE GENOMIC DNA]</scope>
</reference>
<sequence length="363" mass="40424">MIIDTTEVQDLNSFSRLESLKEVYGIIGMFLPILTLVLGITIGVLVIVWLEREISAGIQQRIGPEYAGPLGILQALADGTKLIFKENLFPSRGDTRLFSIGPSIAVISILLSYSVIPFSYHLVLSDLNIGVFLWIAISSIAPIGLLMSGYGSNNKYSFLSGLRAAAQSISYEIPLTLLCVINISLSNSSSTVDIVEAQSKYGFWGWNLWRQPIGFFIFLISSLAECERLPFDLPEAEEELVAGYQTEYSGIKFGLFYVASYLNLLVSSLFVTVLYLGGWNISIPYIFVPELFEINKVGRVFGTTIGIFITLAKTYFFLFISITTRWTLPRLRIDQLLNLGWKFLLPISLGNLLLTTSFQLLSL</sequence>
<organism>
    <name type="scientific">Eucalyptus globulus subsp. globulus</name>
    <name type="common">Tasmanian blue gum</name>
    <dbReference type="NCBI Taxonomy" id="71271"/>
    <lineage>
        <taxon>Eukaryota</taxon>
        <taxon>Viridiplantae</taxon>
        <taxon>Streptophyta</taxon>
        <taxon>Embryophyta</taxon>
        <taxon>Tracheophyta</taxon>
        <taxon>Spermatophyta</taxon>
        <taxon>Magnoliopsida</taxon>
        <taxon>eudicotyledons</taxon>
        <taxon>Gunneridae</taxon>
        <taxon>Pentapetalae</taxon>
        <taxon>rosids</taxon>
        <taxon>malvids</taxon>
        <taxon>Myrtales</taxon>
        <taxon>Myrtaceae</taxon>
        <taxon>Myrtoideae</taxon>
        <taxon>Eucalypteae</taxon>
        <taxon>Eucalyptus</taxon>
    </lineage>
</organism>
<geneLocation type="chloroplast"/>
<gene>
    <name evidence="1" type="primary">ndhA</name>
</gene>
<protein>
    <recommendedName>
        <fullName evidence="1">NAD(P)H-quinone oxidoreductase subunit 1, chloroplastic</fullName>
        <ecNumber evidence="1">7.1.1.-</ecNumber>
    </recommendedName>
    <alternativeName>
        <fullName evidence="1">NAD(P)H dehydrogenase subunit 1</fullName>
        <shortName evidence="1">NDH subunit 1</shortName>
    </alternativeName>
    <alternativeName>
        <fullName evidence="1">NADH-plastoquinone oxidoreductase subunit 1</fullName>
    </alternativeName>
</protein>
<evidence type="ECO:0000255" key="1">
    <source>
        <dbReference type="HAMAP-Rule" id="MF_01350"/>
    </source>
</evidence>
<comment type="function">
    <text evidence="1">NDH shuttles electrons from NAD(P)H:plastoquinone, via FMN and iron-sulfur (Fe-S) centers, to quinones in the photosynthetic chain and possibly in a chloroplast respiratory chain. The immediate electron acceptor for the enzyme in this species is believed to be plastoquinone. Couples the redox reaction to proton translocation, and thus conserves the redox energy in a proton gradient.</text>
</comment>
<comment type="catalytic activity">
    <reaction evidence="1">
        <text>a plastoquinone + NADH + (n+1) H(+)(in) = a plastoquinol + NAD(+) + n H(+)(out)</text>
        <dbReference type="Rhea" id="RHEA:42608"/>
        <dbReference type="Rhea" id="RHEA-COMP:9561"/>
        <dbReference type="Rhea" id="RHEA-COMP:9562"/>
        <dbReference type="ChEBI" id="CHEBI:15378"/>
        <dbReference type="ChEBI" id="CHEBI:17757"/>
        <dbReference type="ChEBI" id="CHEBI:57540"/>
        <dbReference type="ChEBI" id="CHEBI:57945"/>
        <dbReference type="ChEBI" id="CHEBI:62192"/>
    </reaction>
</comment>
<comment type="catalytic activity">
    <reaction evidence="1">
        <text>a plastoquinone + NADPH + (n+1) H(+)(in) = a plastoquinol + NADP(+) + n H(+)(out)</text>
        <dbReference type="Rhea" id="RHEA:42612"/>
        <dbReference type="Rhea" id="RHEA-COMP:9561"/>
        <dbReference type="Rhea" id="RHEA-COMP:9562"/>
        <dbReference type="ChEBI" id="CHEBI:15378"/>
        <dbReference type="ChEBI" id="CHEBI:17757"/>
        <dbReference type="ChEBI" id="CHEBI:57783"/>
        <dbReference type="ChEBI" id="CHEBI:58349"/>
        <dbReference type="ChEBI" id="CHEBI:62192"/>
    </reaction>
</comment>
<comment type="subunit">
    <text evidence="1">NDH is composed of at least 16 different subunits, 5 of which are encoded in the nucleus.</text>
</comment>
<comment type="subcellular location">
    <subcellularLocation>
        <location evidence="1">Plastid</location>
        <location evidence="1">Chloroplast thylakoid membrane</location>
        <topology evidence="1">Multi-pass membrane protein</topology>
    </subcellularLocation>
</comment>
<comment type="similarity">
    <text evidence="1">Belongs to the complex I subunit 1 family.</text>
</comment>
<accession>Q49KU3</accession>
<name>NU1C_EUCGG</name>
<keyword id="KW-0150">Chloroplast</keyword>
<keyword id="KW-0472">Membrane</keyword>
<keyword id="KW-0520">NAD</keyword>
<keyword id="KW-0521">NADP</keyword>
<keyword id="KW-0934">Plastid</keyword>
<keyword id="KW-0618">Plastoquinone</keyword>
<keyword id="KW-0874">Quinone</keyword>
<keyword id="KW-0793">Thylakoid</keyword>
<keyword id="KW-1278">Translocase</keyword>
<keyword id="KW-0812">Transmembrane</keyword>
<keyword id="KW-1133">Transmembrane helix</keyword>
<dbReference type="EC" id="7.1.1.-" evidence="1"/>
<dbReference type="EMBL" id="AY780259">
    <property type="protein sequence ID" value="AAX21083.1"/>
    <property type="molecule type" value="Genomic_DNA"/>
</dbReference>
<dbReference type="RefSeq" id="YP_636354.1">
    <property type="nucleotide sequence ID" value="NC_008115.1"/>
</dbReference>
<dbReference type="SMR" id="Q49KU3"/>
<dbReference type="GeneID" id="4108435"/>
<dbReference type="GO" id="GO:0009535">
    <property type="term" value="C:chloroplast thylakoid membrane"/>
    <property type="evidence" value="ECO:0007669"/>
    <property type="project" value="UniProtKB-SubCell"/>
</dbReference>
<dbReference type="GO" id="GO:0003954">
    <property type="term" value="F:NADH dehydrogenase activity"/>
    <property type="evidence" value="ECO:0007669"/>
    <property type="project" value="TreeGrafter"/>
</dbReference>
<dbReference type="GO" id="GO:0016655">
    <property type="term" value="F:oxidoreductase activity, acting on NAD(P)H, quinone or similar compound as acceptor"/>
    <property type="evidence" value="ECO:0007669"/>
    <property type="project" value="UniProtKB-UniRule"/>
</dbReference>
<dbReference type="GO" id="GO:0048038">
    <property type="term" value="F:quinone binding"/>
    <property type="evidence" value="ECO:0007669"/>
    <property type="project" value="UniProtKB-KW"/>
</dbReference>
<dbReference type="GO" id="GO:0009060">
    <property type="term" value="P:aerobic respiration"/>
    <property type="evidence" value="ECO:0007669"/>
    <property type="project" value="TreeGrafter"/>
</dbReference>
<dbReference type="GO" id="GO:0019684">
    <property type="term" value="P:photosynthesis, light reaction"/>
    <property type="evidence" value="ECO:0007669"/>
    <property type="project" value="UniProtKB-UniRule"/>
</dbReference>
<dbReference type="HAMAP" id="MF_01350">
    <property type="entry name" value="NDH1_NuoH"/>
    <property type="match status" value="1"/>
</dbReference>
<dbReference type="InterPro" id="IPR001694">
    <property type="entry name" value="NADH_UbQ_OxRdtase_su1/FPO"/>
</dbReference>
<dbReference type="InterPro" id="IPR018086">
    <property type="entry name" value="NADH_UbQ_OxRdtase_su1_CS"/>
</dbReference>
<dbReference type="NCBIfam" id="NF004741">
    <property type="entry name" value="PRK06076.1-2"/>
    <property type="match status" value="1"/>
</dbReference>
<dbReference type="PANTHER" id="PTHR11432">
    <property type="entry name" value="NADH DEHYDROGENASE SUBUNIT 1"/>
    <property type="match status" value="1"/>
</dbReference>
<dbReference type="PANTHER" id="PTHR11432:SF3">
    <property type="entry name" value="NADH-UBIQUINONE OXIDOREDUCTASE CHAIN 1"/>
    <property type="match status" value="1"/>
</dbReference>
<dbReference type="Pfam" id="PF00146">
    <property type="entry name" value="NADHdh"/>
    <property type="match status" value="1"/>
</dbReference>
<dbReference type="PROSITE" id="PS00667">
    <property type="entry name" value="COMPLEX1_ND1_1"/>
    <property type="match status" value="1"/>
</dbReference>
<dbReference type="PROSITE" id="PS00668">
    <property type="entry name" value="COMPLEX1_ND1_2"/>
    <property type="match status" value="1"/>
</dbReference>